<reference key="1">
    <citation type="journal article" date="2005" name="J. Bacteriol.">
        <title>Insights on evolution of virulence and resistance from the complete genome analysis of an early methicillin-resistant Staphylococcus aureus strain and a biofilm-producing methicillin-resistant Staphylococcus epidermidis strain.</title>
        <authorList>
            <person name="Gill S.R."/>
            <person name="Fouts D.E."/>
            <person name="Archer G.L."/>
            <person name="Mongodin E.F."/>
            <person name="DeBoy R.T."/>
            <person name="Ravel J."/>
            <person name="Paulsen I.T."/>
            <person name="Kolonay J.F."/>
            <person name="Brinkac L.M."/>
            <person name="Beanan M.J."/>
            <person name="Dodson R.J."/>
            <person name="Daugherty S.C."/>
            <person name="Madupu R."/>
            <person name="Angiuoli S.V."/>
            <person name="Durkin A.S."/>
            <person name="Haft D.H."/>
            <person name="Vamathevan J.J."/>
            <person name="Khouri H."/>
            <person name="Utterback T.R."/>
            <person name="Lee C."/>
            <person name="Dimitrov G."/>
            <person name="Jiang L."/>
            <person name="Qin H."/>
            <person name="Weidman J."/>
            <person name="Tran K."/>
            <person name="Kang K.H."/>
            <person name="Hance I.R."/>
            <person name="Nelson K.E."/>
            <person name="Fraser C.M."/>
        </authorList>
    </citation>
    <scope>NUCLEOTIDE SEQUENCE [LARGE SCALE GENOMIC DNA]</scope>
    <source>
        <strain>ATCC 35984 / DSM 28319 / BCRC 17069 / CCUG 31568 / BM 3577 / RP62A</strain>
    </source>
</reference>
<accession>Q5HKC5</accession>
<dbReference type="EMBL" id="CP000029">
    <property type="protein sequence ID" value="AAW53271.1"/>
    <property type="molecule type" value="Genomic_DNA"/>
</dbReference>
<dbReference type="RefSeq" id="WP_002505876.1">
    <property type="nucleotide sequence ID" value="NC_002976.3"/>
</dbReference>
<dbReference type="SMR" id="Q5HKC5"/>
<dbReference type="STRING" id="176279.SERP2423"/>
<dbReference type="KEGG" id="ser:SERP2423"/>
<dbReference type="eggNOG" id="ENOG5033UD8">
    <property type="taxonomic scope" value="Bacteria"/>
</dbReference>
<dbReference type="HOGENOM" id="CLU_071589_0_0_9"/>
<dbReference type="Proteomes" id="UP000000531">
    <property type="component" value="Chromosome"/>
</dbReference>
<dbReference type="GO" id="GO:0005886">
    <property type="term" value="C:plasma membrane"/>
    <property type="evidence" value="ECO:0007669"/>
    <property type="project" value="UniProtKB-SubCell"/>
</dbReference>
<dbReference type="Gene3D" id="2.50.20.40">
    <property type="match status" value="1"/>
</dbReference>
<dbReference type="InterPro" id="IPR007595">
    <property type="entry name" value="Csa"/>
</dbReference>
<dbReference type="InterPro" id="IPR038641">
    <property type="entry name" value="Csa_sf"/>
</dbReference>
<dbReference type="NCBIfam" id="TIGR01742">
    <property type="entry name" value="SA_tandem_lipo"/>
    <property type="match status" value="1"/>
</dbReference>
<dbReference type="Pfam" id="PF04507">
    <property type="entry name" value="DUF576"/>
    <property type="match status" value="1"/>
</dbReference>
<dbReference type="PROSITE" id="PS51257">
    <property type="entry name" value="PROKAR_LIPOPROTEIN"/>
    <property type="match status" value="1"/>
</dbReference>
<evidence type="ECO:0000255" key="1">
    <source>
        <dbReference type="PROSITE-ProRule" id="PRU00303"/>
    </source>
</evidence>
<evidence type="ECO:0000305" key="2"/>
<name>Y2423_STAEQ</name>
<protein>
    <recommendedName>
        <fullName>Uncharacterized lipoprotein SERP2423</fullName>
    </recommendedName>
</protein>
<sequence length="259" mass="30279">MKHSSKIIVFVSFLILTIFIGGCGFINKEDSKEAEIKQNFNKTLSMYPTKNLEDFYDKEGYRDEEFDKDDKGTWIINSKMIVEPKGEEMEARGMVLRINRNTRTAKGNFIIKRITENNKGIPDVKDKKYPVKMEHNKIIPTKQIKDKKLKKEIENFKFFVQYGNFKNLKDYKDGEISYNPNVPSYSAQYQLNNYDNNVKQLRKRYDIPTNQAPKLLLKGTGDLKGSSVGYKHLEFTFVENKKENIYFTDSINFNPSRGN</sequence>
<gene>
    <name type="ordered locus">SERP2423</name>
</gene>
<comment type="subcellular location">
    <subcellularLocation>
        <location evidence="1">Cell membrane</location>
        <topology evidence="1">Lipid-anchor</topology>
    </subcellularLocation>
</comment>
<comment type="similarity">
    <text evidence="2">Belongs to the staphylococcal tandem lipoprotein family.</text>
</comment>
<keyword id="KW-1003">Cell membrane</keyword>
<keyword id="KW-0449">Lipoprotein</keyword>
<keyword id="KW-0472">Membrane</keyword>
<keyword id="KW-0564">Palmitate</keyword>
<keyword id="KW-1185">Reference proteome</keyword>
<keyword id="KW-0732">Signal</keyword>
<proteinExistence type="inferred from homology"/>
<feature type="signal peptide" evidence="1">
    <location>
        <begin position="1"/>
        <end position="22"/>
    </location>
</feature>
<feature type="chain" id="PRO_0000282184" description="Uncharacterized lipoprotein SERP2423">
    <location>
        <begin position="23"/>
        <end position="259"/>
    </location>
</feature>
<feature type="lipid moiety-binding region" description="N-palmitoyl cysteine" evidence="1">
    <location>
        <position position="23"/>
    </location>
</feature>
<feature type="lipid moiety-binding region" description="S-diacylglycerol cysteine" evidence="1">
    <location>
        <position position="23"/>
    </location>
</feature>
<organism>
    <name type="scientific">Staphylococcus epidermidis (strain ATCC 35984 / DSM 28319 / BCRC 17069 / CCUG 31568 / BM 3577 / RP62A)</name>
    <dbReference type="NCBI Taxonomy" id="176279"/>
    <lineage>
        <taxon>Bacteria</taxon>
        <taxon>Bacillati</taxon>
        <taxon>Bacillota</taxon>
        <taxon>Bacilli</taxon>
        <taxon>Bacillales</taxon>
        <taxon>Staphylococcaceae</taxon>
        <taxon>Staphylococcus</taxon>
    </lineage>
</organism>